<organism>
    <name type="scientific">Olea europaea</name>
    <name type="common">Common olive</name>
    <dbReference type="NCBI Taxonomy" id="4146"/>
    <lineage>
        <taxon>Eukaryota</taxon>
        <taxon>Viridiplantae</taxon>
        <taxon>Streptophyta</taxon>
        <taxon>Embryophyta</taxon>
        <taxon>Tracheophyta</taxon>
        <taxon>Spermatophyta</taxon>
        <taxon>Magnoliopsida</taxon>
        <taxon>eudicotyledons</taxon>
        <taxon>Gunneridae</taxon>
        <taxon>Pentapetalae</taxon>
        <taxon>asterids</taxon>
        <taxon>lamiids</taxon>
        <taxon>Lamiales</taxon>
        <taxon>Oleaceae</taxon>
        <taxon>Oleeae</taxon>
        <taxon>Olea</taxon>
    </lineage>
</organism>
<accession>A4GDU3</accession>
<name>PROBL_OLEEU</name>
<feature type="initiator methionine" description="Removed" evidence="1">
    <location>
        <position position="1"/>
    </location>
</feature>
<feature type="chain" id="PRO_0000425029" description="Profilin-4">
    <location>
        <begin position="2"/>
        <end position="134"/>
    </location>
</feature>
<feature type="short sequence motif" description="Involved in PIP2 interaction">
    <location>
        <begin position="84"/>
        <end position="100"/>
    </location>
</feature>
<feature type="modified residue" description="Phosphothreonine" evidence="1">
    <location>
        <position position="114"/>
    </location>
</feature>
<feature type="disulfide bond" evidence="3">
    <location>
        <begin position="13"/>
        <end position="118"/>
    </location>
</feature>
<reference key="1">
    <citation type="journal article" date="2012" name="PLoS ONE">
        <title>Characterization of profilin polymorphism in pollen with a focus on multifunctionality.</title>
        <authorList>
            <person name="Jimenez-Lopez J.C."/>
            <person name="Morales S."/>
            <person name="Castro A.J."/>
            <person name="Volkmann D."/>
            <person name="Rodriguez-Garcia M.I."/>
            <person name="Alche Jde D."/>
        </authorList>
    </citation>
    <scope>NUCLEOTIDE SEQUENCE [MRNA]</scope>
    <scope>POLYMORPHISM</scope>
    <source>
        <strain>cv. Verdial de Velez-Malaga</strain>
    </source>
</reference>
<reference key="2">
    <citation type="journal article" date="2013" name="PLoS ONE">
        <title>Analysis of the effects of polymorphism on pollen profilin structural functionality and the generation of conformational, T- and B-cell epitopes.</title>
        <authorList>
            <person name="Jimenez-Lopez J.C."/>
            <person name="Rodriguez-Garcia M.I."/>
            <person name="Alche J.D."/>
        </authorList>
    </citation>
    <scope>3D-STRUCTURE MODELING</scope>
    <scope>DISULFIDE BOND</scope>
</reference>
<dbReference type="EMBL" id="DQ138361">
    <property type="protein sequence ID" value="AAZ30439.1"/>
    <property type="molecule type" value="mRNA"/>
</dbReference>
<dbReference type="SMR" id="A4GDU3"/>
<dbReference type="Allergome" id="490">
    <property type="allergen name" value="Ole e 2"/>
</dbReference>
<dbReference type="GO" id="GO:0005938">
    <property type="term" value="C:cell cortex"/>
    <property type="evidence" value="ECO:0007669"/>
    <property type="project" value="TreeGrafter"/>
</dbReference>
<dbReference type="GO" id="GO:0005856">
    <property type="term" value="C:cytoskeleton"/>
    <property type="evidence" value="ECO:0007669"/>
    <property type="project" value="UniProtKB-SubCell"/>
</dbReference>
<dbReference type="GO" id="GO:0003785">
    <property type="term" value="F:actin monomer binding"/>
    <property type="evidence" value="ECO:0007669"/>
    <property type="project" value="TreeGrafter"/>
</dbReference>
<dbReference type="CDD" id="cd00148">
    <property type="entry name" value="PROF"/>
    <property type="match status" value="1"/>
</dbReference>
<dbReference type="FunFam" id="3.30.450.30:FF:000001">
    <property type="entry name" value="Profilin"/>
    <property type="match status" value="1"/>
</dbReference>
<dbReference type="Gene3D" id="3.30.450.30">
    <property type="entry name" value="Dynein light chain 2a, cytoplasmic"/>
    <property type="match status" value="1"/>
</dbReference>
<dbReference type="InterPro" id="IPR048278">
    <property type="entry name" value="PFN"/>
</dbReference>
<dbReference type="InterPro" id="IPR005455">
    <property type="entry name" value="PFN_euk"/>
</dbReference>
<dbReference type="InterPro" id="IPR036140">
    <property type="entry name" value="PFN_sf"/>
</dbReference>
<dbReference type="InterPro" id="IPR027310">
    <property type="entry name" value="Profilin_CS"/>
</dbReference>
<dbReference type="PANTHER" id="PTHR11604">
    <property type="entry name" value="PROFILIN"/>
    <property type="match status" value="1"/>
</dbReference>
<dbReference type="PANTHER" id="PTHR11604:SF25">
    <property type="entry name" value="PROFILIN-5"/>
    <property type="match status" value="1"/>
</dbReference>
<dbReference type="Pfam" id="PF00235">
    <property type="entry name" value="Profilin"/>
    <property type="match status" value="1"/>
</dbReference>
<dbReference type="PRINTS" id="PR00392">
    <property type="entry name" value="PROFILIN"/>
</dbReference>
<dbReference type="PRINTS" id="PR01640">
    <property type="entry name" value="PROFILINPLNT"/>
</dbReference>
<dbReference type="SMART" id="SM00392">
    <property type="entry name" value="PROF"/>
    <property type="match status" value="1"/>
</dbReference>
<dbReference type="SUPFAM" id="SSF55770">
    <property type="entry name" value="Profilin (actin-binding protein)"/>
    <property type="match status" value="1"/>
</dbReference>
<dbReference type="PROSITE" id="PS00414">
    <property type="entry name" value="PROFILIN"/>
    <property type="match status" value="1"/>
</dbReference>
<sequence>MSWQSYVDDHLMCDIEGHEGHRLTAAAIVGHDGSVWAQSATFPQFKPEEMNGIMTDFNAPGHLVPTGLHLGGTKYMVIQGEAGAVIRGKKGSGGITIKKTGQALVFGIYEEPVTPGQCNMVVERLGDYLLEQGL</sequence>
<proteinExistence type="evidence at protein level"/>
<evidence type="ECO:0000250" key="1"/>
<evidence type="ECO:0000305" key="2"/>
<evidence type="ECO:0000305" key="3">
    <source>
    </source>
</evidence>
<keyword id="KW-0009">Actin-binding</keyword>
<keyword id="KW-0020">Allergen</keyword>
<keyword id="KW-0963">Cytoplasm</keyword>
<keyword id="KW-0206">Cytoskeleton</keyword>
<keyword id="KW-1015">Disulfide bond</keyword>
<keyword id="KW-0597">Phosphoprotein</keyword>
<protein>
    <recommendedName>
        <fullName>Profilin-4</fullName>
    </recommendedName>
    <alternativeName>
        <fullName>Pollen allergen Ole e 2</fullName>
    </alternativeName>
    <allergenName>Ole e 2</allergenName>
</protein>
<comment type="function">
    <text evidence="1">Binds to actin and affects the structure of the cytoskeleton. At high concentrations, profilin prevents the polymerization of actin, whereas it enhances it at low concentrations (By similarity).</text>
</comment>
<comment type="subunit">
    <text evidence="1">Occurs in many kinds of cells as a complex with monomeric actin in a 1:1 ratio.</text>
</comment>
<comment type="subcellular location">
    <subcellularLocation>
        <location evidence="1">Cytoplasm</location>
        <location evidence="1">Cytoskeleton</location>
    </subcellularLocation>
</comment>
<comment type="PTM">
    <text evidence="1">Phosphorylated by MAP kinases.</text>
</comment>
<comment type="polymorphism">
    <text>Several isoforms of the allergen exist due to polymorphism.</text>
</comment>
<comment type="allergen">
    <text>Causes an allergic reaction in human.</text>
</comment>
<comment type="miscellaneous">
    <text evidence="3">The variability of the residues taking part of IgE-binding epitopes might be responsible of the difference in cross-reactivity among olive pollen cultivars, and between distantly related pollen species, leading to a variable range of allergy reactions among atopic patients.</text>
</comment>
<comment type="similarity">
    <text evidence="2">Belongs to the profilin family.</text>
</comment>